<proteinExistence type="uncertain"/>
<protein>
    <recommendedName>
        <fullName>Putative UPF0320 protein YJR162C</fullName>
    </recommendedName>
</protein>
<sequence length="116" mass="13383">MLQYIPLSNLPYSHIPLHHPSLTISTKCTRIIMHGTCLSGLYPVPFTHNSHDYPHFNIYISFGGPKYCITALNTYVIPLLHRILTTQFIYTYANITKKSPLKSPKHKNILFFNHNT</sequence>
<dbReference type="EMBL" id="Z49662">
    <property type="protein sequence ID" value="CAA89695.1"/>
    <property type="molecule type" value="Genomic_DNA"/>
</dbReference>
<dbReference type="PIR" id="S57192">
    <property type="entry name" value="S57192"/>
</dbReference>
<dbReference type="DIP" id="DIP-5474N"/>
<dbReference type="IntAct" id="P47188">
    <property type="interactions" value="2"/>
</dbReference>
<dbReference type="MINT" id="P47188"/>
<dbReference type="STRING" id="4932.YJR162C"/>
<dbReference type="PaxDb" id="4932-YJR162C"/>
<dbReference type="EnsemblFungi" id="YJR162C_mRNA">
    <property type="protein sequence ID" value="YJR162C"/>
    <property type="gene ID" value="YJR162C"/>
</dbReference>
<dbReference type="AGR" id="SGD:S000003923"/>
<dbReference type="SGD" id="S000003923">
    <property type="gene designation" value="YJR162C"/>
</dbReference>
<dbReference type="GeneTree" id="ENSGT00940000177535"/>
<dbReference type="HOGENOM" id="CLU_164954_0_0_1"/>
<dbReference type="InterPro" id="IPR007414">
    <property type="entry name" value="DUF468"/>
</dbReference>
<dbReference type="Pfam" id="PF04318">
    <property type="entry name" value="DUF468"/>
    <property type="match status" value="1"/>
</dbReference>
<reference key="1">
    <citation type="journal article" date="1996" name="EMBO J.">
        <title>Complete nucleotide sequence of Saccharomyces cerevisiae chromosome X.</title>
        <authorList>
            <person name="Galibert F."/>
            <person name="Alexandraki D."/>
            <person name="Baur A."/>
            <person name="Boles E."/>
            <person name="Chalwatzis N."/>
            <person name="Chuat J.-C."/>
            <person name="Coster F."/>
            <person name="Cziepluch C."/>
            <person name="de Haan M."/>
            <person name="Domdey H."/>
            <person name="Durand P."/>
            <person name="Entian K.-D."/>
            <person name="Gatius M."/>
            <person name="Goffeau A."/>
            <person name="Grivell L.A."/>
            <person name="Hennemann A."/>
            <person name="Herbert C.J."/>
            <person name="Heumann K."/>
            <person name="Hilger F."/>
            <person name="Hollenberg C.P."/>
            <person name="Huang M.-E."/>
            <person name="Jacq C."/>
            <person name="Jauniaux J.-C."/>
            <person name="Katsoulou C."/>
            <person name="Kirchrath L."/>
            <person name="Kleine K."/>
            <person name="Kordes E."/>
            <person name="Koetter P."/>
            <person name="Liebl S."/>
            <person name="Louis E.J."/>
            <person name="Manus V."/>
            <person name="Mewes H.-W."/>
            <person name="Miosga T."/>
            <person name="Obermaier B."/>
            <person name="Perea J."/>
            <person name="Pohl T.M."/>
            <person name="Portetelle D."/>
            <person name="Pujol A."/>
            <person name="Purnelle B."/>
            <person name="Ramezani Rad M."/>
            <person name="Rasmussen S.W."/>
            <person name="Rose M."/>
            <person name="Rossau R."/>
            <person name="Schaaff-Gerstenschlaeger I."/>
            <person name="Smits P.H.M."/>
            <person name="Scarcez T."/>
            <person name="Soriano N."/>
            <person name="To Van D."/>
            <person name="Tzermia M."/>
            <person name="Van Broekhoven A."/>
            <person name="Vandenbol M."/>
            <person name="Wedler H."/>
            <person name="von Wettstein D."/>
            <person name="Wambutt R."/>
            <person name="Zagulski M."/>
            <person name="Zollner A."/>
            <person name="Karpfinger-Hartl L."/>
        </authorList>
    </citation>
    <scope>NUCLEOTIDE SEQUENCE [LARGE SCALE GENOMIC DNA]</scope>
    <source>
        <strain>ATCC 204508 / S288c</strain>
    </source>
</reference>
<reference key="2">
    <citation type="journal article" date="2014" name="G3 (Bethesda)">
        <title>The reference genome sequence of Saccharomyces cerevisiae: Then and now.</title>
        <authorList>
            <person name="Engel S.R."/>
            <person name="Dietrich F.S."/>
            <person name="Fisk D.G."/>
            <person name="Binkley G."/>
            <person name="Balakrishnan R."/>
            <person name="Costanzo M.C."/>
            <person name="Dwight S.S."/>
            <person name="Hitz B.C."/>
            <person name="Karra K."/>
            <person name="Nash R.S."/>
            <person name="Weng S."/>
            <person name="Wong E.D."/>
            <person name="Lloyd P."/>
            <person name="Skrzypek M.S."/>
            <person name="Miyasato S.R."/>
            <person name="Simison M."/>
            <person name="Cherry J.M."/>
        </authorList>
    </citation>
    <scope>GENOME REANNOTATION</scope>
    <source>
        <strain>ATCC 204508 / S288c</strain>
    </source>
</reference>
<organism>
    <name type="scientific">Saccharomyces cerevisiae (strain ATCC 204508 / S288c)</name>
    <name type="common">Baker's yeast</name>
    <dbReference type="NCBI Taxonomy" id="559292"/>
    <lineage>
        <taxon>Eukaryota</taxon>
        <taxon>Fungi</taxon>
        <taxon>Dikarya</taxon>
        <taxon>Ascomycota</taxon>
        <taxon>Saccharomycotina</taxon>
        <taxon>Saccharomycetes</taxon>
        <taxon>Saccharomycetales</taxon>
        <taxon>Saccharomycetaceae</taxon>
        <taxon>Saccharomyces</taxon>
    </lineage>
</organism>
<name>YJ9Z_YEAST</name>
<gene>
    <name type="ordered locus">YJR162C</name>
    <name type="ORF">J2420</name>
</gene>
<comment type="miscellaneous">
    <text evidence="1">Contained within a telomeric X element core sequence.</text>
</comment>
<comment type="similarity">
    <text evidence="1">Belongs to the UPF0320 family.</text>
</comment>
<comment type="caution">
    <text evidence="2">Product of a dubious gene prediction unlikely to encode a functional protein. Because of that it is not part of the S.cerevisiae S288c complete/reference proteome set.</text>
</comment>
<accession>P47188</accession>
<feature type="chain" id="PRO_0000211373" description="Putative UPF0320 protein YJR162C">
    <location>
        <begin position="1"/>
        <end position="116"/>
    </location>
</feature>
<evidence type="ECO:0000305" key="1"/>
<evidence type="ECO:0000305" key="2">
    <source>
    </source>
</evidence>